<sequence length="904" mass="102014">MTSHSPKLTPMFEQYMNIKAEYPDALLFYRMGDFYELFFEDAEVAARELQIALTCRNPNAENKVPMCGVPHHSARSYISQLVDKGYKVAICEQMEDPREAKGLVKRGVIRVLTSGTALEDENLSPKAHTYLGALCWDKSEGAGGFAWVDFSTGEWSGLQSRKEQELWQWVQKMAPRELLLADTLTPPASLELTETQFSKVPERAYFDYKRSAEKIMSAQQVAELGALGLENRKELVRACGALLTYLSQTQKQDLNHLCQFKPLNLNRHLLLDEITERNLELFRRLDGRKGKGTLWHVLDHTVTPMGGRLLQERLKHPWREQAPIDETQEAVSHFFAHNTLRRQLREALDTVYDIERLSTRIFLNRATPRDYVALRQSLKALPAVRELLEAPQTGDGRYATPEEQLGAALPPFLHRMLKSWDDLADYHDLLEKALVDNPPHVITEGGLFRQGFHPALDELMDLSEHGASKLHDLLAEVQQTTGISKIKLGNNRVFGYYFEVPKSVSEELPDTFVRRQTLANAERYTSERLKELEEKLFSAADKRKTMELKLFQQLREHVAQARPRVLFMADLLATLDHWQGLAEAARHWNWVRPVLHDGQDIVIREGRHPVVEAVQGPAGFIPNDLRIDDQRRLLLITGPNMAGKSTVLRQAAIICILAQIGSFVPAREARIGLCDRIFSRVGASDNLAQGQSTFMVEMMETARILRQATRRSLVILDEIGRGTSTFDGLALAWAVVEELMKKQQAGIRTLFATHYHELTSLEGTIPGVHNMNIAIKEWGGEIVFLRRLVPGPSDRSYGVEVAKLAGVPQNVVQRARQILELLEQKSKADGTRRPASYHEAQPLLPGMPEPPSTASAEPPQTVTPPEPPVLTALRDLDTDNLTPLEALTVLTEWKTLWGAGKNEC</sequence>
<comment type="function">
    <text evidence="1">This protein is involved in the repair of mismatches in DNA. It is possible that it carries out the mismatch recognition step. This protein has a weak ATPase activity.</text>
</comment>
<comment type="similarity">
    <text evidence="1">Belongs to the DNA mismatch repair MutS family.</text>
</comment>
<keyword id="KW-0067">ATP-binding</keyword>
<keyword id="KW-0227">DNA damage</keyword>
<keyword id="KW-0234">DNA repair</keyword>
<keyword id="KW-0238">DNA-binding</keyword>
<keyword id="KW-0547">Nucleotide-binding</keyword>
<keyword id="KW-1185">Reference proteome</keyword>
<protein>
    <recommendedName>
        <fullName evidence="1">DNA mismatch repair protein MutS</fullName>
    </recommendedName>
</protein>
<name>MUTS_OLEA2</name>
<evidence type="ECO:0000255" key="1">
    <source>
        <dbReference type="HAMAP-Rule" id="MF_00096"/>
    </source>
</evidence>
<evidence type="ECO:0000256" key="2">
    <source>
        <dbReference type="SAM" id="MobiDB-lite"/>
    </source>
</evidence>
<proteinExistence type="inferred from homology"/>
<feature type="chain" id="PRO_0000224368" description="DNA mismatch repair protein MutS">
    <location>
        <begin position="1"/>
        <end position="904"/>
    </location>
</feature>
<feature type="region of interest" description="Disordered" evidence="2">
    <location>
        <begin position="825"/>
        <end position="869"/>
    </location>
</feature>
<feature type="binding site" evidence="1">
    <location>
        <begin position="638"/>
        <end position="645"/>
    </location>
    <ligand>
        <name>ATP</name>
        <dbReference type="ChEBI" id="CHEBI:30616"/>
    </ligand>
</feature>
<organism>
    <name type="scientific">Oleidesulfovibrio alaskensis (strain ATCC BAA-1058 / DSM 17464 / G20)</name>
    <name type="common">Desulfovibrio alaskensis</name>
    <dbReference type="NCBI Taxonomy" id="207559"/>
    <lineage>
        <taxon>Bacteria</taxon>
        <taxon>Pseudomonadati</taxon>
        <taxon>Thermodesulfobacteriota</taxon>
        <taxon>Desulfovibrionia</taxon>
        <taxon>Desulfovibrionales</taxon>
        <taxon>Desulfovibrionaceae</taxon>
        <taxon>Oleidesulfovibrio</taxon>
    </lineage>
</organism>
<gene>
    <name evidence="1" type="primary">mutS</name>
    <name type="ordered locus">Dde_1976</name>
</gene>
<reference key="1">
    <citation type="journal article" date="2011" name="J. Bacteriol.">
        <title>Complete genome sequence and updated annotation of Desulfovibrio alaskensis G20.</title>
        <authorList>
            <person name="Hauser L.J."/>
            <person name="Land M.L."/>
            <person name="Brown S.D."/>
            <person name="Larimer F."/>
            <person name="Keller K.L."/>
            <person name="Rapp-Giles B.J."/>
            <person name="Price M.N."/>
            <person name="Lin M."/>
            <person name="Bruce D.C."/>
            <person name="Detter J.C."/>
            <person name="Tapia R."/>
            <person name="Han C.S."/>
            <person name="Goodwin L.A."/>
            <person name="Cheng J.F."/>
            <person name="Pitluck S."/>
            <person name="Copeland A."/>
            <person name="Lucas S."/>
            <person name="Nolan M."/>
            <person name="Lapidus A.L."/>
            <person name="Palumbo A.V."/>
            <person name="Wall J.D."/>
        </authorList>
    </citation>
    <scope>NUCLEOTIDE SEQUENCE [LARGE SCALE GENOMIC DNA]</scope>
    <source>
        <strain>ATCC BAA-1058 / DSM 17464 / G20</strain>
    </source>
</reference>
<accession>Q30ZX3</accession>
<dbReference type="EMBL" id="CP000112">
    <property type="protein sequence ID" value="ABB38773.1"/>
    <property type="molecule type" value="Genomic_DNA"/>
</dbReference>
<dbReference type="RefSeq" id="WP_011367883.1">
    <property type="nucleotide sequence ID" value="NC_007519.1"/>
</dbReference>
<dbReference type="SMR" id="Q30ZX3"/>
<dbReference type="STRING" id="207559.Dde_1976"/>
<dbReference type="KEGG" id="dde:Dde_1976"/>
<dbReference type="eggNOG" id="COG0249">
    <property type="taxonomic scope" value="Bacteria"/>
</dbReference>
<dbReference type="HOGENOM" id="CLU_002472_6_0_7"/>
<dbReference type="Proteomes" id="UP000002710">
    <property type="component" value="Chromosome"/>
</dbReference>
<dbReference type="GO" id="GO:0005829">
    <property type="term" value="C:cytosol"/>
    <property type="evidence" value="ECO:0007669"/>
    <property type="project" value="TreeGrafter"/>
</dbReference>
<dbReference type="GO" id="GO:0005524">
    <property type="term" value="F:ATP binding"/>
    <property type="evidence" value="ECO:0007669"/>
    <property type="project" value="UniProtKB-UniRule"/>
</dbReference>
<dbReference type="GO" id="GO:0140664">
    <property type="term" value="F:ATP-dependent DNA damage sensor activity"/>
    <property type="evidence" value="ECO:0007669"/>
    <property type="project" value="InterPro"/>
</dbReference>
<dbReference type="GO" id="GO:0003684">
    <property type="term" value="F:damaged DNA binding"/>
    <property type="evidence" value="ECO:0007669"/>
    <property type="project" value="UniProtKB-UniRule"/>
</dbReference>
<dbReference type="GO" id="GO:0030983">
    <property type="term" value="F:mismatched DNA binding"/>
    <property type="evidence" value="ECO:0007669"/>
    <property type="project" value="InterPro"/>
</dbReference>
<dbReference type="GO" id="GO:0006298">
    <property type="term" value="P:mismatch repair"/>
    <property type="evidence" value="ECO:0007669"/>
    <property type="project" value="UniProtKB-UniRule"/>
</dbReference>
<dbReference type="CDD" id="cd03284">
    <property type="entry name" value="ABC_MutS1"/>
    <property type="match status" value="1"/>
</dbReference>
<dbReference type="FunFam" id="1.10.1420.10:FF:000001">
    <property type="entry name" value="DNA mismatch repair protein MutS"/>
    <property type="match status" value="1"/>
</dbReference>
<dbReference type="FunFam" id="3.40.1170.10:FF:000001">
    <property type="entry name" value="DNA mismatch repair protein MutS"/>
    <property type="match status" value="1"/>
</dbReference>
<dbReference type="FunFam" id="3.40.50.300:FF:000870">
    <property type="entry name" value="MutS protein homolog 4"/>
    <property type="match status" value="1"/>
</dbReference>
<dbReference type="Gene3D" id="1.10.1420.10">
    <property type="match status" value="2"/>
</dbReference>
<dbReference type="Gene3D" id="3.40.1170.10">
    <property type="entry name" value="DNA repair protein MutS, domain I"/>
    <property type="match status" value="1"/>
</dbReference>
<dbReference type="Gene3D" id="3.30.420.110">
    <property type="entry name" value="MutS, connector domain"/>
    <property type="match status" value="1"/>
</dbReference>
<dbReference type="Gene3D" id="3.40.50.300">
    <property type="entry name" value="P-loop containing nucleotide triphosphate hydrolases"/>
    <property type="match status" value="1"/>
</dbReference>
<dbReference type="HAMAP" id="MF_00096">
    <property type="entry name" value="MutS"/>
    <property type="match status" value="1"/>
</dbReference>
<dbReference type="InterPro" id="IPR005748">
    <property type="entry name" value="DNA_mismatch_repair_MutS"/>
</dbReference>
<dbReference type="InterPro" id="IPR007695">
    <property type="entry name" value="DNA_mismatch_repair_MutS-lik_N"/>
</dbReference>
<dbReference type="InterPro" id="IPR017261">
    <property type="entry name" value="DNA_mismatch_repair_MutS/MSH"/>
</dbReference>
<dbReference type="InterPro" id="IPR000432">
    <property type="entry name" value="DNA_mismatch_repair_MutS_C"/>
</dbReference>
<dbReference type="InterPro" id="IPR007861">
    <property type="entry name" value="DNA_mismatch_repair_MutS_clamp"/>
</dbReference>
<dbReference type="InterPro" id="IPR007696">
    <property type="entry name" value="DNA_mismatch_repair_MutS_core"/>
</dbReference>
<dbReference type="InterPro" id="IPR016151">
    <property type="entry name" value="DNA_mismatch_repair_MutS_N"/>
</dbReference>
<dbReference type="InterPro" id="IPR036187">
    <property type="entry name" value="DNA_mismatch_repair_MutS_sf"/>
</dbReference>
<dbReference type="InterPro" id="IPR007860">
    <property type="entry name" value="DNA_mmatch_repair_MutS_con_dom"/>
</dbReference>
<dbReference type="InterPro" id="IPR045076">
    <property type="entry name" value="MutS"/>
</dbReference>
<dbReference type="InterPro" id="IPR036678">
    <property type="entry name" value="MutS_con_dom_sf"/>
</dbReference>
<dbReference type="InterPro" id="IPR027417">
    <property type="entry name" value="P-loop_NTPase"/>
</dbReference>
<dbReference type="NCBIfam" id="TIGR01070">
    <property type="entry name" value="mutS1"/>
    <property type="match status" value="1"/>
</dbReference>
<dbReference type="NCBIfam" id="NF003810">
    <property type="entry name" value="PRK05399.1"/>
    <property type="match status" value="1"/>
</dbReference>
<dbReference type="PANTHER" id="PTHR11361:SF34">
    <property type="entry name" value="DNA MISMATCH REPAIR PROTEIN MSH1, MITOCHONDRIAL"/>
    <property type="match status" value="1"/>
</dbReference>
<dbReference type="PANTHER" id="PTHR11361">
    <property type="entry name" value="DNA MISMATCH REPAIR PROTEIN MUTS FAMILY MEMBER"/>
    <property type="match status" value="1"/>
</dbReference>
<dbReference type="Pfam" id="PF01624">
    <property type="entry name" value="MutS_I"/>
    <property type="match status" value="1"/>
</dbReference>
<dbReference type="Pfam" id="PF05188">
    <property type="entry name" value="MutS_II"/>
    <property type="match status" value="1"/>
</dbReference>
<dbReference type="Pfam" id="PF05192">
    <property type="entry name" value="MutS_III"/>
    <property type="match status" value="1"/>
</dbReference>
<dbReference type="Pfam" id="PF05190">
    <property type="entry name" value="MutS_IV"/>
    <property type="match status" value="1"/>
</dbReference>
<dbReference type="Pfam" id="PF00488">
    <property type="entry name" value="MutS_V"/>
    <property type="match status" value="1"/>
</dbReference>
<dbReference type="PIRSF" id="PIRSF037677">
    <property type="entry name" value="DNA_mis_repair_Msh6"/>
    <property type="match status" value="1"/>
</dbReference>
<dbReference type="SMART" id="SM00534">
    <property type="entry name" value="MUTSac"/>
    <property type="match status" value="1"/>
</dbReference>
<dbReference type="SMART" id="SM00533">
    <property type="entry name" value="MUTSd"/>
    <property type="match status" value="1"/>
</dbReference>
<dbReference type="SUPFAM" id="SSF55271">
    <property type="entry name" value="DNA repair protein MutS, domain I"/>
    <property type="match status" value="1"/>
</dbReference>
<dbReference type="SUPFAM" id="SSF53150">
    <property type="entry name" value="DNA repair protein MutS, domain II"/>
    <property type="match status" value="1"/>
</dbReference>
<dbReference type="SUPFAM" id="SSF48334">
    <property type="entry name" value="DNA repair protein MutS, domain III"/>
    <property type="match status" value="1"/>
</dbReference>
<dbReference type="SUPFAM" id="SSF52540">
    <property type="entry name" value="P-loop containing nucleoside triphosphate hydrolases"/>
    <property type="match status" value="1"/>
</dbReference>
<dbReference type="PROSITE" id="PS00486">
    <property type="entry name" value="DNA_MISMATCH_REPAIR_2"/>
    <property type="match status" value="1"/>
</dbReference>